<sequence length="48" mass="5842">MNFGNKIKCSICKKKIFLREKNLFFPFCSKKCKIIDLYQWISGKYKLF</sequence>
<proteinExistence type="inferred from homology"/>
<protein>
    <recommendedName>
        <fullName evidence="1">DNA gyrase inhibitor YacG</fullName>
    </recommendedName>
</protein>
<accession>Q8D309</accession>
<dbReference type="EMBL" id="BA000021">
    <property type="protein sequence ID" value="BAC24338.1"/>
    <property type="molecule type" value="Genomic_DNA"/>
</dbReference>
<dbReference type="SMR" id="Q8D309"/>
<dbReference type="STRING" id="36870.gene:10368680"/>
<dbReference type="KEGG" id="wbr:yacG"/>
<dbReference type="HOGENOM" id="CLU_3159309_0_0_6"/>
<dbReference type="Proteomes" id="UP000000562">
    <property type="component" value="Chromosome"/>
</dbReference>
<dbReference type="GO" id="GO:0008657">
    <property type="term" value="F:DNA topoisomerase type II (double strand cut, ATP-hydrolyzing) inhibitor activity"/>
    <property type="evidence" value="ECO:0007669"/>
    <property type="project" value="UniProtKB-UniRule"/>
</dbReference>
<dbReference type="GO" id="GO:0008270">
    <property type="term" value="F:zinc ion binding"/>
    <property type="evidence" value="ECO:0007669"/>
    <property type="project" value="UniProtKB-UniRule"/>
</dbReference>
<dbReference type="GO" id="GO:0006355">
    <property type="term" value="P:regulation of DNA-templated transcription"/>
    <property type="evidence" value="ECO:0007669"/>
    <property type="project" value="InterPro"/>
</dbReference>
<dbReference type="Gene3D" id="3.30.50.10">
    <property type="entry name" value="Erythroid Transcription Factor GATA-1, subunit A"/>
    <property type="match status" value="1"/>
</dbReference>
<dbReference type="HAMAP" id="MF_00649">
    <property type="entry name" value="DNA_gyrase_inhibitor_YacG"/>
    <property type="match status" value="1"/>
</dbReference>
<dbReference type="InterPro" id="IPR005584">
    <property type="entry name" value="DNA_gyrase_inhibitor_YacG"/>
</dbReference>
<dbReference type="InterPro" id="IPR013088">
    <property type="entry name" value="Znf_NHR/GATA"/>
</dbReference>
<dbReference type="PANTHER" id="PTHR36150">
    <property type="entry name" value="DNA GYRASE INHIBITOR YACG"/>
    <property type="match status" value="1"/>
</dbReference>
<dbReference type="PANTHER" id="PTHR36150:SF1">
    <property type="entry name" value="DNA GYRASE INHIBITOR YACG"/>
    <property type="match status" value="1"/>
</dbReference>
<dbReference type="Pfam" id="PF03884">
    <property type="entry name" value="YacG"/>
    <property type="match status" value="1"/>
</dbReference>
<dbReference type="SUPFAM" id="SSF57716">
    <property type="entry name" value="Glucocorticoid receptor-like (DNA-binding domain)"/>
    <property type="match status" value="1"/>
</dbReference>
<feature type="chain" id="PRO_0000211733" description="DNA gyrase inhibitor YacG">
    <location>
        <begin position="1"/>
        <end position="48"/>
    </location>
</feature>
<feature type="binding site" evidence="1">
    <location>
        <position position="9"/>
    </location>
    <ligand>
        <name>Zn(2+)</name>
        <dbReference type="ChEBI" id="CHEBI:29105"/>
    </ligand>
</feature>
<feature type="binding site" evidence="1">
    <location>
        <position position="12"/>
    </location>
    <ligand>
        <name>Zn(2+)</name>
        <dbReference type="ChEBI" id="CHEBI:29105"/>
    </ligand>
</feature>
<feature type="binding site" evidence="1">
    <location>
        <position position="28"/>
    </location>
    <ligand>
        <name>Zn(2+)</name>
        <dbReference type="ChEBI" id="CHEBI:29105"/>
    </ligand>
</feature>
<feature type="binding site" evidence="1">
    <location>
        <position position="32"/>
    </location>
    <ligand>
        <name>Zn(2+)</name>
        <dbReference type="ChEBI" id="CHEBI:29105"/>
    </ligand>
</feature>
<keyword id="KW-0479">Metal-binding</keyword>
<keyword id="KW-1185">Reference proteome</keyword>
<keyword id="KW-0862">Zinc</keyword>
<gene>
    <name evidence="1" type="primary">yacG</name>
    <name type="ordered locus">WIGBR1920</name>
</gene>
<reference key="1">
    <citation type="journal article" date="2002" name="Nat. Genet.">
        <title>Genome sequence of the endocellular obligate symbiont of tsetse flies, Wigglesworthia glossinidia.</title>
        <authorList>
            <person name="Akman L."/>
            <person name="Yamashita A."/>
            <person name="Watanabe H."/>
            <person name="Oshima K."/>
            <person name="Shiba T."/>
            <person name="Hattori M."/>
            <person name="Aksoy S."/>
        </authorList>
    </citation>
    <scope>NUCLEOTIDE SEQUENCE [LARGE SCALE GENOMIC DNA]</scope>
</reference>
<organism>
    <name type="scientific">Wigglesworthia glossinidia brevipalpis</name>
    <dbReference type="NCBI Taxonomy" id="36870"/>
    <lineage>
        <taxon>Bacteria</taxon>
        <taxon>Pseudomonadati</taxon>
        <taxon>Pseudomonadota</taxon>
        <taxon>Gammaproteobacteria</taxon>
        <taxon>Enterobacterales</taxon>
        <taxon>Erwiniaceae</taxon>
        <taxon>Wigglesworthia</taxon>
    </lineage>
</organism>
<evidence type="ECO:0000255" key="1">
    <source>
        <dbReference type="HAMAP-Rule" id="MF_00649"/>
    </source>
</evidence>
<name>YACG_WIGBR</name>
<comment type="function">
    <text evidence="1">Inhibits all the catalytic activities of DNA gyrase by preventing its interaction with DNA. Acts by binding directly to the C-terminal domain of GyrB, which probably disrupts DNA binding by the gyrase.</text>
</comment>
<comment type="cofactor">
    <cofactor evidence="1">
        <name>Zn(2+)</name>
        <dbReference type="ChEBI" id="CHEBI:29105"/>
    </cofactor>
    <text evidence="1">Binds 1 zinc ion.</text>
</comment>
<comment type="subunit">
    <text evidence="1">Interacts with GyrB.</text>
</comment>
<comment type="similarity">
    <text evidence="1">Belongs to the DNA gyrase inhibitor YacG family.</text>
</comment>